<evidence type="ECO:0000255" key="1">
    <source>
        <dbReference type="HAMAP-Rule" id="MF_00542"/>
    </source>
</evidence>
<protein>
    <recommendedName>
        <fullName evidence="1">Probable butyrate kinase</fullName>
        <shortName evidence="1">BK</shortName>
        <ecNumber evidence="1">2.7.2.7</ecNumber>
    </recommendedName>
    <alternativeName>
        <fullName evidence="1">Branched-chain carboxylic acid kinase</fullName>
    </alternativeName>
</protein>
<name>BUK_OLEA2</name>
<organism>
    <name type="scientific">Oleidesulfovibrio alaskensis (strain ATCC BAA-1058 / DSM 17464 / G20)</name>
    <name type="common">Desulfovibrio alaskensis</name>
    <dbReference type="NCBI Taxonomy" id="207559"/>
    <lineage>
        <taxon>Bacteria</taxon>
        <taxon>Pseudomonadati</taxon>
        <taxon>Thermodesulfobacteriota</taxon>
        <taxon>Desulfovibrionia</taxon>
        <taxon>Desulfovibrionales</taxon>
        <taxon>Desulfovibrionaceae</taxon>
        <taxon>Oleidesulfovibrio</taxon>
    </lineage>
</organism>
<dbReference type="EC" id="2.7.2.7" evidence="1"/>
<dbReference type="EMBL" id="CP000112">
    <property type="protein sequence ID" value="ABB39922.1"/>
    <property type="molecule type" value="Genomic_DNA"/>
</dbReference>
<dbReference type="RefSeq" id="WP_011368880.1">
    <property type="nucleotide sequence ID" value="NC_007519.1"/>
</dbReference>
<dbReference type="SMR" id="Q30WM4"/>
<dbReference type="STRING" id="207559.Dde_3128"/>
<dbReference type="KEGG" id="dde:Dde_3128"/>
<dbReference type="eggNOG" id="COG3426">
    <property type="taxonomic scope" value="Bacteria"/>
</dbReference>
<dbReference type="HOGENOM" id="CLU_048716_0_0_7"/>
<dbReference type="Proteomes" id="UP000002710">
    <property type="component" value="Chromosome"/>
</dbReference>
<dbReference type="GO" id="GO:0005737">
    <property type="term" value="C:cytoplasm"/>
    <property type="evidence" value="ECO:0007669"/>
    <property type="project" value="UniProtKB-SubCell"/>
</dbReference>
<dbReference type="GO" id="GO:0008776">
    <property type="term" value="F:acetate kinase activity"/>
    <property type="evidence" value="ECO:0007669"/>
    <property type="project" value="TreeGrafter"/>
</dbReference>
<dbReference type="GO" id="GO:0005524">
    <property type="term" value="F:ATP binding"/>
    <property type="evidence" value="ECO:0007669"/>
    <property type="project" value="UniProtKB-KW"/>
</dbReference>
<dbReference type="GO" id="GO:0047761">
    <property type="term" value="F:butyrate kinase activity"/>
    <property type="evidence" value="ECO:0007669"/>
    <property type="project" value="UniProtKB-UniRule"/>
</dbReference>
<dbReference type="GO" id="GO:0006083">
    <property type="term" value="P:acetate metabolic process"/>
    <property type="evidence" value="ECO:0007669"/>
    <property type="project" value="TreeGrafter"/>
</dbReference>
<dbReference type="CDD" id="cd24011">
    <property type="entry name" value="ASKHA_NBD_BK"/>
    <property type="match status" value="1"/>
</dbReference>
<dbReference type="Gene3D" id="3.30.420.40">
    <property type="match status" value="2"/>
</dbReference>
<dbReference type="HAMAP" id="MF_00542">
    <property type="entry name" value="Butyrate_kinase"/>
    <property type="match status" value="1"/>
</dbReference>
<dbReference type="InterPro" id="IPR000890">
    <property type="entry name" value="Aliphatic_acid_kin_short-chain"/>
</dbReference>
<dbReference type="InterPro" id="IPR023865">
    <property type="entry name" value="Aliphatic_acid_kinase_CS"/>
</dbReference>
<dbReference type="InterPro" id="IPR043129">
    <property type="entry name" value="ATPase_NBD"/>
</dbReference>
<dbReference type="InterPro" id="IPR011245">
    <property type="entry name" value="Butyrate_kin"/>
</dbReference>
<dbReference type="NCBIfam" id="TIGR02707">
    <property type="entry name" value="butyr_kinase"/>
    <property type="match status" value="1"/>
</dbReference>
<dbReference type="NCBIfam" id="NF002834">
    <property type="entry name" value="PRK03011.1-5"/>
    <property type="match status" value="1"/>
</dbReference>
<dbReference type="PANTHER" id="PTHR21060">
    <property type="entry name" value="ACETATE KINASE"/>
    <property type="match status" value="1"/>
</dbReference>
<dbReference type="PANTHER" id="PTHR21060:SF3">
    <property type="entry name" value="BUTYRATE KINASE 2-RELATED"/>
    <property type="match status" value="1"/>
</dbReference>
<dbReference type="Pfam" id="PF00871">
    <property type="entry name" value="Acetate_kinase"/>
    <property type="match status" value="1"/>
</dbReference>
<dbReference type="PIRSF" id="PIRSF036458">
    <property type="entry name" value="Butyrate_kin"/>
    <property type="match status" value="1"/>
</dbReference>
<dbReference type="PRINTS" id="PR00471">
    <property type="entry name" value="ACETATEKNASE"/>
</dbReference>
<dbReference type="SUPFAM" id="SSF53067">
    <property type="entry name" value="Actin-like ATPase domain"/>
    <property type="match status" value="2"/>
</dbReference>
<dbReference type="PROSITE" id="PS01075">
    <property type="entry name" value="ACETATE_KINASE_1"/>
    <property type="match status" value="1"/>
</dbReference>
<dbReference type="PROSITE" id="PS01076">
    <property type="entry name" value="ACETATE_KINASE_2"/>
    <property type="match status" value="1"/>
</dbReference>
<reference key="1">
    <citation type="journal article" date="2011" name="J. Bacteriol.">
        <title>Complete genome sequence and updated annotation of Desulfovibrio alaskensis G20.</title>
        <authorList>
            <person name="Hauser L.J."/>
            <person name="Land M.L."/>
            <person name="Brown S.D."/>
            <person name="Larimer F."/>
            <person name="Keller K.L."/>
            <person name="Rapp-Giles B.J."/>
            <person name="Price M.N."/>
            <person name="Lin M."/>
            <person name="Bruce D.C."/>
            <person name="Detter J.C."/>
            <person name="Tapia R."/>
            <person name="Han C.S."/>
            <person name="Goodwin L.A."/>
            <person name="Cheng J.F."/>
            <person name="Pitluck S."/>
            <person name="Copeland A."/>
            <person name="Lucas S."/>
            <person name="Nolan M."/>
            <person name="Lapidus A.L."/>
            <person name="Palumbo A.V."/>
            <person name="Wall J.D."/>
        </authorList>
    </citation>
    <scope>NUCLEOTIDE SEQUENCE [LARGE SCALE GENOMIC DNA]</scope>
    <source>
        <strain>ATCC BAA-1058 / DSM 17464 / G20</strain>
    </source>
</reference>
<accession>Q30WM4</accession>
<keyword id="KW-0067">ATP-binding</keyword>
<keyword id="KW-0963">Cytoplasm</keyword>
<keyword id="KW-0418">Kinase</keyword>
<keyword id="KW-0547">Nucleotide-binding</keyword>
<keyword id="KW-1185">Reference proteome</keyword>
<keyword id="KW-0808">Transferase</keyword>
<gene>
    <name evidence="1" type="primary">buk</name>
    <name type="ordered locus">Dde_3128</name>
</gene>
<comment type="catalytic activity">
    <reaction evidence="1">
        <text>butanoate + ATP = butanoyl phosphate + ADP</text>
        <dbReference type="Rhea" id="RHEA:13585"/>
        <dbReference type="ChEBI" id="CHEBI:17968"/>
        <dbReference type="ChEBI" id="CHEBI:30616"/>
        <dbReference type="ChEBI" id="CHEBI:58079"/>
        <dbReference type="ChEBI" id="CHEBI:456216"/>
        <dbReference type="EC" id="2.7.2.7"/>
    </reaction>
</comment>
<comment type="subcellular location">
    <subcellularLocation>
        <location evidence="1">Cytoplasm</location>
    </subcellularLocation>
</comment>
<comment type="similarity">
    <text evidence="1">Belongs to the acetokinase family.</text>
</comment>
<proteinExistence type="inferred from homology"/>
<feature type="chain" id="PRO_1000081940" description="Probable butyrate kinase">
    <location>
        <begin position="1"/>
        <end position="372"/>
    </location>
</feature>
<sequence>MSLILTINPGSTSTKIAVFAAEEELFERTVEHPHDAFSGLAGVYGQLEARRHAVQTMLSRAGYADARFDIVVGRGGLLAPMHGGAWRVNQTMLDILESAAHGEHPCNLGAPLALAFARSHGAHRNVQAIIVDPVVTDELDPVARIGGLPELPRRSVFHALSQRAAARRAAAQLGIRYEDGRFLVGHFGGGISVGAHRHGRVVDVNNALEGEGPFSPERTGGLPVMPALELVRRGVYSFERMRSIVQREGGMWAHLGTNDLREVQRRMDAGDTAAAQIFDALAYNSAKALCALLPALTGAGQDVPSAPPVDAVVLTGGMARSGRFMQAVSDRLRYLGPVIVLPRLEEMQALAMGGLRVLRGEETPAEYGGGMS</sequence>